<dbReference type="EC" id="2.3.2.-"/>
<dbReference type="EMBL" id="Z73147">
    <property type="protein sequence ID" value="CAA97493.1"/>
    <property type="molecule type" value="Genomic_DNA"/>
</dbReference>
<dbReference type="EMBL" id="AY558190">
    <property type="protein sequence ID" value="AAS56516.1"/>
    <property type="molecule type" value="Genomic_DNA"/>
</dbReference>
<dbReference type="EMBL" id="BK006945">
    <property type="protein sequence ID" value="DAA09280.1"/>
    <property type="molecule type" value="Genomic_DNA"/>
</dbReference>
<dbReference type="PIR" id="S64794">
    <property type="entry name" value="S64794"/>
</dbReference>
<dbReference type="RefSeq" id="NP_013058.1">
    <property type="nucleotide sequence ID" value="NM_001181862.1"/>
</dbReference>
<dbReference type="PDB" id="4EBR">
    <property type="method" value="X-ray"/>
    <property type="resolution" value="2.70 A"/>
    <property type="chains" value="A/B=1-167"/>
</dbReference>
<dbReference type="PDB" id="4GSK">
    <property type="method" value="X-ray"/>
    <property type="resolution" value="2.90 A"/>
    <property type="chains" value="Y/Z=1-167"/>
</dbReference>
<dbReference type="PDBsum" id="4EBR"/>
<dbReference type="PDBsum" id="4GSK"/>
<dbReference type="SMR" id="Q07879"/>
<dbReference type="BioGRID" id="31271">
    <property type="interactions" value="137"/>
</dbReference>
<dbReference type="DIP" id="DIP-4842N"/>
<dbReference type="FunCoup" id="Q07879">
    <property type="interactions" value="24"/>
</dbReference>
<dbReference type="IntAct" id="Q07879">
    <property type="interactions" value="3"/>
</dbReference>
<dbReference type="STRING" id="4932.YLL042C"/>
<dbReference type="PaxDb" id="4932-YLL042C"/>
<dbReference type="PeptideAtlas" id="Q07879"/>
<dbReference type="EnsemblFungi" id="YLL042C_mRNA">
    <property type="protein sequence ID" value="YLL042C"/>
    <property type="gene ID" value="YLL042C"/>
</dbReference>
<dbReference type="GeneID" id="850684"/>
<dbReference type="KEGG" id="sce:YLL042C"/>
<dbReference type="AGR" id="SGD:S000003965"/>
<dbReference type="SGD" id="S000003965">
    <property type="gene designation" value="ATG10"/>
</dbReference>
<dbReference type="VEuPathDB" id="FungiDB:YLL042C"/>
<dbReference type="eggNOG" id="ENOG502S7IG">
    <property type="taxonomic scope" value="Eukaryota"/>
</dbReference>
<dbReference type="HOGENOM" id="CLU_114192_0_0_1"/>
<dbReference type="InParanoid" id="Q07879"/>
<dbReference type="OMA" id="CDTDANV"/>
<dbReference type="OrthoDB" id="4031501at2759"/>
<dbReference type="BioCyc" id="YEAST:G3O-32143-MONOMER"/>
<dbReference type="BioGRID-ORCS" id="850684">
    <property type="hits" value="0 hits in 10 CRISPR screens"/>
</dbReference>
<dbReference type="EvolutionaryTrace" id="Q07879"/>
<dbReference type="PRO" id="PR:Q07879"/>
<dbReference type="Proteomes" id="UP000002311">
    <property type="component" value="Chromosome XII"/>
</dbReference>
<dbReference type="RNAct" id="Q07879">
    <property type="molecule type" value="protein"/>
</dbReference>
<dbReference type="GO" id="GO:0034045">
    <property type="term" value="C:phagophore assembly site membrane"/>
    <property type="evidence" value="ECO:0007669"/>
    <property type="project" value="UniProtKB-SubCell"/>
</dbReference>
<dbReference type="GO" id="GO:0019777">
    <property type="term" value="F:Atg12 transferase activity"/>
    <property type="evidence" value="ECO:0000315"/>
    <property type="project" value="SGD"/>
</dbReference>
<dbReference type="GO" id="GO:0000422">
    <property type="term" value="P:autophagy of mitochondrion"/>
    <property type="evidence" value="ECO:0000315"/>
    <property type="project" value="SGD"/>
</dbReference>
<dbReference type="GO" id="GO:0032258">
    <property type="term" value="P:cytoplasm to vacuole targeting by the Cvt pathway"/>
    <property type="evidence" value="ECO:0000315"/>
    <property type="project" value="SGD"/>
</dbReference>
<dbReference type="GO" id="GO:0016236">
    <property type="term" value="P:macroautophagy"/>
    <property type="evidence" value="ECO:0000315"/>
    <property type="project" value="SGD"/>
</dbReference>
<dbReference type="GO" id="GO:0044804">
    <property type="term" value="P:nucleophagy"/>
    <property type="evidence" value="ECO:0000315"/>
    <property type="project" value="SGD"/>
</dbReference>
<dbReference type="GO" id="GO:0034727">
    <property type="term" value="P:piecemeal microautophagy of the nucleus"/>
    <property type="evidence" value="ECO:0000315"/>
    <property type="project" value="SGD"/>
</dbReference>
<dbReference type="GO" id="GO:0032446">
    <property type="term" value="P:protein modification by small protein conjugation"/>
    <property type="evidence" value="ECO:0000315"/>
    <property type="project" value="SGD"/>
</dbReference>
<dbReference type="FunFam" id="3.30.1460.50:FF:000006">
    <property type="entry name" value="Ubiquitin-like-conjugating enzyme ATG10"/>
    <property type="match status" value="1"/>
</dbReference>
<dbReference type="Gene3D" id="3.30.1460.50">
    <property type="match status" value="1"/>
</dbReference>
<dbReference type="InterPro" id="IPR016524">
    <property type="entry name" value="Atg10"/>
</dbReference>
<dbReference type="InterPro" id="IPR007135">
    <property type="entry name" value="Atg3/Atg10"/>
</dbReference>
<dbReference type="Pfam" id="PF03987">
    <property type="entry name" value="Autophagy_act_C"/>
    <property type="match status" value="1"/>
</dbReference>
<dbReference type="PIRSF" id="PIRSF007802">
    <property type="entry name" value="Autophagy-rel_ATG10"/>
    <property type="match status" value="1"/>
</dbReference>
<keyword id="KW-0002">3D-structure</keyword>
<keyword id="KW-0072">Autophagy</keyword>
<keyword id="KW-0472">Membrane</keyword>
<keyword id="KW-0653">Protein transport</keyword>
<keyword id="KW-1185">Reference proteome</keyword>
<keyword id="KW-0808">Transferase</keyword>
<keyword id="KW-0813">Transport</keyword>
<keyword id="KW-0833">Ubl conjugation pathway</keyword>
<protein>
    <recommendedName>
        <fullName>Ubiquitin-like-conjugating enzyme ATG10</fullName>
        <ecNumber>2.3.2.-</ecNumber>
    </recommendedName>
    <alternativeName>
        <fullName>Autophagy-related protein 10</fullName>
    </alternativeName>
</protein>
<feature type="chain" id="PRO_0000096190" description="Ubiquitin-like-conjugating enzyme ATG10">
    <location>
        <begin position="1"/>
        <end position="167"/>
    </location>
</feature>
<feature type="active site" description="Glycyl thioester intermediate">
    <location>
        <position position="133"/>
    </location>
</feature>
<feature type="mutagenesis site" description="No effect on conjugating activity. Normal autophagic activity." evidence="1">
    <original>C</original>
    <variation>S</variation>
    <location>
        <position position="26"/>
    </location>
</feature>
<feature type="mutagenesis site" description="Complete loss of covalent binding to ATG12." evidence="1">
    <original>C</original>
    <variation>A</variation>
    <location>
        <position position="133"/>
    </location>
</feature>
<feature type="mutagenesis site" description="Strong decrease of binding to ATG12. No more formation of ATG12-ATG5 conjugate. Defect in autophagy." evidence="1">
    <original>C</original>
    <variation>S</variation>
    <location>
        <position position="133"/>
    </location>
</feature>
<feature type="mutagenesis site" description="No effect on conjugating activity. Normal autophagic activity." evidence="1">
    <original>C</original>
    <variation>S</variation>
    <location>
        <position position="137"/>
    </location>
</feature>
<feature type="helix" evidence="15">
    <location>
        <begin position="4"/>
        <end position="16"/>
    </location>
</feature>
<feature type="turn" evidence="15">
    <location>
        <begin position="17"/>
        <end position="22"/>
    </location>
</feature>
<feature type="strand" evidence="15">
    <location>
        <begin position="26"/>
        <end position="31"/>
    </location>
</feature>
<feature type="strand" evidence="16">
    <location>
        <begin position="33"/>
        <end position="36"/>
    </location>
</feature>
<feature type="strand" evidence="15">
    <location>
        <begin position="38"/>
        <end position="42"/>
    </location>
</feature>
<feature type="helix" evidence="16">
    <location>
        <begin position="46"/>
        <end position="54"/>
    </location>
</feature>
<feature type="strand" evidence="15">
    <location>
        <begin position="61"/>
        <end position="70"/>
    </location>
</feature>
<feature type="turn" evidence="15">
    <location>
        <begin position="71"/>
        <end position="74"/>
    </location>
</feature>
<feature type="strand" evidence="15">
    <location>
        <begin position="75"/>
        <end position="88"/>
    </location>
</feature>
<feature type="strand" evidence="15">
    <location>
        <begin position="91"/>
        <end position="96"/>
    </location>
</feature>
<feature type="helix" evidence="15">
    <location>
        <begin position="99"/>
        <end position="106"/>
    </location>
</feature>
<feature type="turn" evidence="15">
    <location>
        <begin position="107"/>
        <end position="110"/>
    </location>
</feature>
<feature type="strand" evidence="15">
    <location>
        <begin position="115"/>
        <end position="122"/>
    </location>
</feature>
<feature type="strand" evidence="15">
    <location>
        <begin position="125"/>
        <end position="129"/>
    </location>
</feature>
<feature type="helix" evidence="15">
    <location>
        <begin position="135"/>
        <end position="137"/>
    </location>
</feature>
<feature type="helix" evidence="15">
    <location>
        <begin position="146"/>
        <end position="149"/>
    </location>
</feature>
<feature type="helix" evidence="15">
    <location>
        <begin position="150"/>
        <end position="157"/>
    </location>
</feature>
<feature type="helix" evidence="15">
    <location>
        <begin position="159"/>
        <end position="162"/>
    </location>
</feature>
<accession>Q07879</accession>
<accession>D6VXW4</accession>
<proteinExistence type="evidence at protein level"/>
<comment type="function">
    <text evidence="1 2 5 6 9 12 13">E2-like enzyme required for the cytoplasm to vacuole transport (Cvt), autophagy and nucleophagy. Acts as an E2-like enzyme that catalyzes the conjugation of ATG12 to ATG5. ATG12 conjugation to ATG5 is required for proper localization of ATG8 to the preautophagosomal structure (PAS). Likely serves as an ATG5-recognition molecule.</text>
</comment>
<comment type="subunit">
    <text evidence="1 3 7 8 10 11">Forms homooligomers. Interacts with ATG7 and ATG12.</text>
</comment>
<comment type="interaction">
    <interactant intactId="EBI-36629">
        <id>Q07879</id>
    </interactant>
    <interactant intactId="EBI-2677">
        <id>P38862</id>
        <label>ATG7</label>
    </interactant>
    <organismsDiffer>false</organismsDiffer>
    <experiments>7</experiments>
</comment>
<comment type="subcellular location">
    <subcellularLocation>
        <location evidence="4">Preautophagosomal structure membrane</location>
        <topology evidence="4">Peripheral membrane protein</topology>
    </subcellularLocation>
</comment>
<comment type="similarity">
    <text evidence="14">Belongs to the ATG10 family.</text>
</comment>
<evidence type="ECO:0000269" key="1">
    <source>
    </source>
</evidence>
<evidence type="ECO:0000269" key="2">
    <source>
    </source>
</evidence>
<evidence type="ECO:0000269" key="3">
    <source>
    </source>
</evidence>
<evidence type="ECO:0000269" key="4">
    <source>
    </source>
</evidence>
<evidence type="ECO:0000269" key="5">
    <source>
    </source>
</evidence>
<evidence type="ECO:0000269" key="6">
    <source>
    </source>
</evidence>
<evidence type="ECO:0000269" key="7">
    <source>
    </source>
</evidence>
<evidence type="ECO:0000269" key="8">
    <source>
    </source>
</evidence>
<evidence type="ECO:0000269" key="9">
    <source>
    </source>
</evidence>
<evidence type="ECO:0000269" key="10">
    <source>
    </source>
</evidence>
<evidence type="ECO:0000269" key="11">
    <source>
    </source>
</evidence>
<evidence type="ECO:0000269" key="12">
    <source>
    </source>
</evidence>
<evidence type="ECO:0000269" key="13">
    <source>
    </source>
</evidence>
<evidence type="ECO:0000305" key="14"/>
<evidence type="ECO:0007829" key="15">
    <source>
        <dbReference type="PDB" id="4EBR"/>
    </source>
</evidence>
<evidence type="ECO:0007829" key="16">
    <source>
        <dbReference type="PDB" id="4GSK"/>
    </source>
</evidence>
<name>ATG10_YEAST</name>
<reference key="1">
    <citation type="journal article" date="1997" name="Nature">
        <title>The nucleotide sequence of Saccharomyces cerevisiae chromosome XII.</title>
        <authorList>
            <person name="Johnston M."/>
            <person name="Hillier L.W."/>
            <person name="Riles L."/>
            <person name="Albermann K."/>
            <person name="Andre B."/>
            <person name="Ansorge W."/>
            <person name="Benes V."/>
            <person name="Brueckner M."/>
            <person name="Delius H."/>
            <person name="Dubois E."/>
            <person name="Duesterhoeft A."/>
            <person name="Entian K.-D."/>
            <person name="Floeth M."/>
            <person name="Goffeau A."/>
            <person name="Hebling U."/>
            <person name="Heumann K."/>
            <person name="Heuss-Neitzel D."/>
            <person name="Hilbert H."/>
            <person name="Hilger F."/>
            <person name="Kleine K."/>
            <person name="Koetter P."/>
            <person name="Louis E.J."/>
            <person name="Messenguy F."/>
            <person name="Mewes H.-W."/>
            <person name="Miosga T."/>
            <person name="Moestl D."/>
            <person name="Mueller-Auer S."/>
            <person name="Nentwich U."/>
            <person name="Obermaier B."/>
            <person name="Piravandi E."/>
            <person name="Pohl T.M."/>
            <person name="Portetelle D."/>
            <person name="Purnelle B."/>
            <person name="Rechmann S."/>
            <person name="Rieger M."/>
            <person name="Rinke M."/>
            <person name="Rose M."/>
            <person name="Scharfe M."/>
            <person name="Scherens B."/>
            <person name="Scholler P."/>
            <person name="Schwager C."/>
            <person name="Schwarz S."/>
            <person name="Underwood A.P."/>
            <person name="Urrestarazu L.A."/>
            <person name="Vandenbol M."/>
            <person name="Verhasselt P."/>
            <person name="Vierendeels F."/>
            <person name="Voet M."/>
            <person name="Volckaert G."/>
            <person name="Voss H."/>
            <person name="Wambutt R."/>
            <person name="Wedler E."/>
            <person name="Wedler H."/>
            <person name="Zimmermann F.K."/>
            <person name="Zollner A."/>
            <person name="Hani J."/>
            <person name="Hoheisel J.D."/>
        </authorList>
    </citation>
    <scope>NUCLEOTIDE SEQUENCE [LARGE SCALE GENOMIC DNA]</scope>
    <source>
        <strain>ATCC 204508 / S288c</strain>
    </source>
</reference>
<reference key="2">
    <citation type="journal article" date="2014" name="G3 (Bethesda)">
        <title>The reference genome sequence of Saccharomyces cerevisiae: Then and now.</title>
        <authorList>
            <person name="Engel S.R."/>
            <person name="Dietrich F.S."/>
            <person name="Fisk D.G."/>
            <person name="Binkley G."/>
            <person name="Balakrishnan R."/>
            <person name="Costanzo M.C."/>
            <person name="Dwight S.S."/>
            <person name="Hitz B.C."/>
            <person name="Karra K."/>
            <person name="Nash R.S."/>
            <person name="Weng S."/>
            <person name="Wong E.D."/>
            <person name="Lloyd P."/>
            <person name="Skrzypek M.S."/>
            <person name="Miyasato S.R."/>
            <person name="Simison M."/>
            <person name="Cherry J.M."/>
        </authorList>
    </citation>
    <scope>GENOME REANNOTATION</scope>
    <source>
        <strain>ATCC 204508 / S288c</strain>
    </source>
</reference>
<reference key="3">
    <citation type="submission" date="2004-02" db="EMBL/GenBank/DDBJ databases">
        <authorList>
            <person name="Marsischky G."/>
            <person name="Rolfs A."/>
            <person name="Richardson A."/>
            <person name="Kane M."/>
            <person name="Baqui M."/>
            <person name="Taycher E."/>
            <person name="Hu Y."/>
            <person name="Vannberg F."/>
            <person name="Weger J."/>
            <person name="Kramer J."/>
            <person name="Moreira D."/>
            <person name="Kelley F."/>
            <person name="Zuo D."/>
            <person name="Raphael J."/>
            <person name="Hogle C."/>
            <person name="Jepson D."/>
            <person name="Williamson J."/>
            <person name="Camargo A."/>
            <person name="Gonzaga L."/>
            <person name="Vasconcelos A.T."/>
            <person name="Simpson A.J.G."/>
            <person name="Kolodner R."/>
            <person name="Harlow E."/>
            <person name="LaBaer J."/>
        </authorList>
    </citation>
    <scope>NUCLEOTIDE SEQUENCE [GENOMIC DNA]</scope>
</reference>
<reference key="4">
    <citation type="journal article" date="1993" name="FEBS Lett.">
        <title>Isolation and characterization of autophagy-defective mutants of Saccharomyces cerevisiae.</title>
        <authorList>
            <person name="Tsukada M."/>
            <person name="Ohsumi Y."/>
        </authorList>
    </citation>
    <scope>FUNCTION</scope>
</reference>
<reference key="5">
    <citation type="journal article" date="1998" name="Nature">
        <title>A protein conjugation system essential for autophagy.</title>
        <authorList>
            <person name="Mizushima N."/>
            <person name="Noda T."/>
            <person name="Yoshimori T."/>
            <person name="Tanaka Y."/>
            <person name="Ishii T."/>
            <person name="George M.D."/>
            <person name="Klionsky D.J."/>
            <person name="Ohsumi M."/>
            <person name="Ohsumi Y."/>
        </authorList>
    </citation>
    <scope>FUNCTION</scope>
</reference>
<reference key="6">
    <citation type="journal article" date="1999" name="EMBO J.">
        <title>Apg10p, a novel protein-conjugating enzyme essential for autophagy in yeast.</title>
        <authorList>
            <person name="Shintani T."/>
            <person name="Mizushima N."/>
            <person name="Ogawa Y."/>
            <person name="Matsuura A."/>
            <person name="Noda T."/>
            <person name="Ohsumi Y."/>
        </authorList>
    </citation>
    <scope>FUNCTION</scope>
    <scope>INTERACTION WITH ATG7 AND ATG12</scope>
    <scope>MUTAGENESIS OF CYS-26; CYS-133 AND CYS-137</scope>
</reference>
<reference key="7">
    <citation type="journal article" date="2001" name="EMBO J.">
        <title>The pre-autophagosomal structure organized by concerted functions of APG genes is essential for autophagosome formation.</title>
        <authorList>
            <person name="Suzuki K."/>
            <person name="Kirisako T."/>
            <person name="Kamada Y."/>
            <person name="Mizushima N."/>
            <person name="Noda T."/>
            <person name="Ohsumi Y."/>
        </authorList>
    </citation>
    <scope>FUNCTION</scope>
</reference>
<reference key="8">
    <citation type="journal article" date="2003" name="Dev. Cell">
        <title>A unified nomenclature for yeast autophagy-related genes.</title>
        <authorList>
            <person name="Klionsky D.J."/>
            <person name="Cregg J.M."/>
            <person name="Dunn W.A. Jr."/>
            <person name="Emr S.D."/>
            <person name="Sakai Y."/>
            <person name="Sandoval I.V."/>
            <person name="Sibirny A."/>
            <person name="Subramani S."/>
            <person name="Thumm M."/>
            <person name="Veenhuis M."/>
            <person name="Ohsumi Y."/>
        </authorList>
    </citation>
    <scope>NOMENCLATURE</scope>
</reference>
<reference key="9">
    <citation type="journal article" date="2005" name="Autophagy">
        <title>Structure-function relationship of Atg12, a ubiquitin-like modifier essential for autophagy.</title>
        <authorList>
            <person name="Hanada T."/>
            <person name="Ohsumi Y."/>
        </authorList>
    </citation>
    <scope>INTERACTION WITH ATG12</scope>
</reference>
<reference key="10">
    <citation type="journal article" date="2007" name="Acta Crystallogr. F">
        <title>Crystallization and preliminary X-ray analysis of Atg10.</title>
        <authorList>
            <person name="Yamaguti M."/>
            <person name="Suzuki N.N."/>
            <person name="Fujioka Y."/>
            <person name="Ohsumi Y."/>
            <person name="Inagaki F."/>
        </authorList>
    </citation>
    <scope>CRYSTALLIZATION</scope>
</reference>
<reference key="11">
    <citation type="journal article" date="2007" name="Genes Cells">
        <title>Hierarchy of Atg proteins in pre-autophagosomal structure organization.</title>
        <authorList>
            <person name="Suzuki K."/>
            <person name="Kubota Y."/>
            <person name="Sekito T."/>
            <person name="Ohsumi Y."/>
        </authorList>
    </citation>
    <scope>SUBCELLULAR LOCATION</scope>
</reference>
<reference key="12">
    <citation type="journal article" date="2008" name="J. Cell Biol.">
        <title>In vivo reconstitution of autophagy in Saccharomyces cerevisiae.</title>
        <authorList>
            <person name="Cao Y."/>
            <person name="Cheong H."/>
            <person name="Song H."/>
            <person name="Klionsky D.J."/>
        </authorList>
    </citation>
    <scope>FUNCTION</scope>
</reference>
<reference key="13">
    <citation type="journal article" date="2008" name="Mol. Biol. Cell">
        <title>Piecemeal microautophagy of the nucleus requires the core macroautophagy genes.</title>
        <authorList>
            <person name="Krick R."/>
            <person name="Muehe Y."/>
            <person name="Prick T."/>
            <person name="Bremer S."/>
            <person name="Schlotterhose P."/>
            <person name="Eskelinen E.L."/>
            <person name="Millen J."/>
            <person name="Goldfarb D.S."/>
            <person name="Thumm M."/>
        </authorList>
    </citation>
    <scope>FUNCTION</scope>
</reference>
<reference key="14">
    <citation type="journal article" date="2010" name="J. Microbiol. Biotechnol.">
        <title>Purification and characterization of a ubiquitin-like system for autophagosome formation.</title>
        <authorList>
            <person name="Bae J.Y."/>
            <person name="Park H.H."/>
        </authorList>
    </citation>
    <scope>SUBUNIT</scope>
</reference>
<reference key="15">
    <citation type="journal article" date="2012" name="Nat. Struct. Mol. Biol.">
        <title>Noncanonical E2 recruitment by the autophagy E1 revealed by Atg7-Atg3 and Atg7-Atg10 structures.</title>
        <authorList>
            <person name="Kaiser S.E."/>
            <person name="Mao K."/>
            <person name="Taherbhoy A.M."/>
            <person name="Yu S."/>
            <person name="Olszewski J.L."/>
            <person name="Duda D.M."/>
            <person name="Kurinov I."/>
            <person name="Deng A."/>
            <person name="Fenn T.D."/>
            <person name="Klionsky D.J."/>
            <person name="Schulman B.A."/>
        </authorList>
    </citation>
    <scope>INTERACTION WITH ATG7</scope>
</reference>
<reference key="16">
    <citation type="journal article" date="2011" name="Nat. Struct. Mol. Biol.">
        <title>Insights into noncanonical E1 enzyme activation from the structure of autophagic E1 Atg7 with Atg8.</title>
        <authorList>
            <person name="Hong S.B."/>
            <person name="Kim B.W."/>
            <person name="Lee K.E."/>
            <person name="Kim S.W."/>
            <person name="Jeon H."/>
            <person name="Kim J."/>
            <person name="Song H.K."/>
        </authorList>
    </citation>
    <scope>INTERACTION WITH ATG7</scope>
</reference>
<reference key="17">
    <citation type="journal article" date="2012" name="PLoS ONE">
        <title>A late form of nucleophagy in Saccharomyces cerevisiae.</title>
        <authorList>
            <person name="Mijaljica D."/>
            <person name="Prescott M."/>
            <person name="Devenish R.J."/>
        </authorList>
    </citation>
    <scope>FUNCTION</scope>
</reference>
<reference key="18">
    <citation type="journal article" date="2012" name="Acta Crystallogr. D">
        <title>Structure of the autophagic E2 enzyme Atg10.</title>
        <authorList>
            <person name="Hong S.B."/>
            <person name="Kim B.W."/>
            <person name="Kim J.H."/>
            <person name="Song H.K."/>
        </authorList>
    </citation>
    <scope>X-RAY CRYSTALLOGRAPHY (2.7 ANGSTROMS)</scope>
    <scope>INTERACTION WITH ATG7</scope>
</reference>
<sequence>MIPYQEWHSQLQSLYDSQIFHNWALCQDVHLNDEKDGLLLRLIPTRQLQKNTERIENKLLNHIELYLTYSKVYNEPLLLLRIWEEKSIDGIPMTKLMLPTDIESLLDVQGKFQLGLDTIINLEGSVWYSFHPCDTSCIVGDQAEFMSTYLRRWVSIFIFSWLGYEDS</sequence>
<organism>
    <name type="scientific">Saccharomyces cerevisiae (strain ATCC 204508 / S288c)</name>
    <name type="common">Baker's yeast</name>
    <dbReference type="NCBI Taxonomy" id="559292"/>
    <lineage>
        <taxon>Eukaryota</taxon>
        <taxon>Fungi</taxon>
        <taxon>Dikarya</taxon>
        <taxon>Ascomycota</taxon>
        <taxon>Saccharomycotina</taxon>
        <taxon>Saccharomycetes</taxon>
        <taxon>Saccharomycetales</taxon>
        <taxon>Saccharomycetaceae</taxon>
        <taxon>Saccharomyces</taxon>
    </lineage>
</organism>
<gene>
    <name type="primary">ATG10</name>
    <name type="synonym">APG10</name>
    <name type="ordered locus">YLL042C</name>
</gene>